<comment type="function">
    <text evidence="1">Bidirectionally degrades single-stranded DNA into large acid-insoluble oligonucleotides, which are then degraded further into small acid-soluble oligonucleotides.</text>
</comment>
<comment type="catalytic activity">
    <reaction evidence="1">
        <text>Exonucleolytic cleavage in either 5'- to 3'- or 3'- to 5'-direction to yield nucleoside 5'-phosphates.</text>
        <dbReference type="EC" id="3.1.11.6"/>
    </reaction>
</comment>
<comment type="subunit">
    <text evidence="1">Heterooligomer composed of large and small subunits.</text>
</comment>
<comment type="subcellular location">
    <subcellularLocation>
        <location evidence="1">Cytoplasm</location>
    </subcellularLocation>
</comment>
<comment type="similarity">
    <text evidence="1">Belongs to the XseB family.</text>
</comment>
<organism>
    <name type="scientific">Burkholderia mallei (strain NCTC 10247)</name>
    <dbReference type="NCBI Taxonomy" id="320389"/>
    <lineage>
        <taxon>Bacteria</taxon>
        <taxon>Pseudomonadati</taxon>
        <taxon>Pseudomonadota</taxon>
        <taxon>Betaproteobacteria</taxon>
        <taxon>Burkholderiales</taxon>
        <taxon>Burkholderiaceae</taxon>
        <taxon>Burkholderia</taxon>
        <taxon>pseudomallei group</taxon>
    </lineage>
</organism>
<gene>
    <name evidence="1" type="primary">xseB</name>
    <name type="ordered locus">BMA10247_A0362</name>
</gene>
<feature type="chain" id="PRO_1000019570" description="Exodeoxyribonuclease 7 small subunit">
    <location>
        <begin position="1"/>
        <end position="97"/>
    </location>
</feature>
<feature type="region of interest" description="Disordered" evidence="2">
    <location>
        <begin position="1"/>
        <end position="21"/>
    </location>
</feature>
<evidence type="ECO:0000255" key="1">
    <source>
        <dbReference type="HAMAP-Rule" id="MF_00337"/>
    </source>
</evidence>
<evidence type="ECO:0000256" key="2">
    <source>
        <dbReference type="SAM" id="MobiDB-lite"/>
    </source>
</evidence>
<dbReference type="EC" id="3.1.11.6" evidence="1"/>
<dbReference type="EMBL" id="CP000547">
    <property type="protein sequence ID" value="ABO02519.1"/>
    <property type="molecule type" value="Genomic_DNA"/>
</dbReference>
<dbReference type="RefSeq" id="WP_004190549.1">
    <property type="nucleotide sequence ID" value="NZ_CP007801.1"/>
</dbReference>
<dbReference type="SMR" id="A3MBD0"/>
<dbReference type="KEGG" id="bmaz:BM44_3369"/>
<dbReference type="KEGG" id="bmn:BMA10247_A0362"/>
<dbReference type="PATRIC" id="fig|320389.8.peg.3783"/>
<dbReference type="GO" id="GO:0005829">
    <property type="term" value="C:cytosol"/>
    <property type="evidence" value="ECO:0007669"/>
    <property type="project" value="TreeGrafter"/>
</dbReference>
<dbReference type="GO" id="GO:0009318">
    <property type="term" value="C:exodeoxyribonuclease VII complex"/>
    <property type="evidence" value="ECO:0007669"/>
    <property type="project" value="InterPro"/>
</dbReference>
<dbReference type="GO" id="GO:0008855">
    <property type="term" value="F:exodeoxyribonuclease VII activity"/>
    <property type="evidence" value="ECO:0007669"/>
    <property type="project" value="UniProtKB-UniRule"/>
</dbReference>
<dbReference type="GO" id="GO:0006308">
    <property type="term" value="P:DNA catabolic process"/>
    <property type="evidence" value="ECO:0007669"/>
    <property type="project" value="UniProtKB-UniRule"/>
</dbReference>
<dbReference type="Gene3D" id="1.10.287.1040">
    <property type="entry name" value="Exonuclease VII, small subunit"/>
    <property type="match status" value="1"/>
</dbReference>
<dbReference type="HAMAP" id="MF_00337">
    <property type="entry name" value="Exonuc_7_S"/>
    <property type="match status" value="1"/>
</dbReference>
<dbReference type="InterPro" id="IPR003761">
    <property type="entry name" value="Exonuc_VII_S"/>
</dbReference>
<dbReference type="InterPro" id="IPR037004">
    <property type="entry name" value="Exonuc_VII_ssu_sf"/>
</dbReference>
<dbReference type="NCBIfam" id="NF002141">
    <property type="entry name" value="PRK00977.1-5"/>
    <property type="match status" value="1"/>
</dbReference>
<dbReference type="NCBIfam" id="TIGR01280">
    <property type="entry name" value="xseB"/>
    <property type="match status" value="1"/>
</dbReference>
<dbReference type="PANTHER" id="PTHR34137">
    <property type="entry name" value="EXODEOXYRIBONUCLEASE 7 SMALL SUBUNIT"/>
    <property type="match status" value="1"/>
</dbReference>
<dbReference type="PANTHER" id="PTHR34137:SF1">
    <property type="entry name" value="EXODEOXYRIBONUCLEASE 7 SMALL SUBUNIT"/>
    <property type="match status" value="1"/>
</dbReference>
<dbReference type="Pfam" id="PF02609">
    <property type="entry name" value="Exonuc_VII_S"/>
    <property type="match status" value="1"/>
</dbReference>
<dbReference type="SUPFAM" id="SSF116842">
    <property type="entry name" value="XseB-like"/>
    <property type="match status" value="1"/>
</dbReference>
<proteinExistence type="inferred from homology"/>
<name>EX7S_BURM7</name>
<keyword id="KW-0963">Cytoplasm</keyword>
<keyword id="KW-0269">Exonuclease</keyword>
<keyword id="KW-0378">Hydrolase</keyword>
<keyword id="KW-0540">Nuclease</keyword>
<reference key="1">
    <citation type="journal article" date="2010" name="Genome Biol. Evol.">
        <title>Continuing evolution of Burkholderia mallei through genome reduction and large-scale rearrangements.</title>
        <authorList>
            <person name="Losada L."/>
            <person name="Ronning C.M."/>
            <person name="DeShazer D."/>
            <person name="Woods D."/>
            <person name="Fedorova N."/>
            <person name="Kim H.S."/>
            <person name="Shabalina S.A."/>
            <person name="Pearson T.R."/>
            <person name="Brinkac L."/>
            <person name="Tan P."/>
            <person name="Nandi T."/>
            <person name="Crabtree J."/>
            <person name="Badger J."/>
            <person name="Beckstrom-Sternberg S."/>
            <person name="Saqib M."/>
            <person name="Schutzer S.E."/>
            <person name="Keim P."/>
            <person name="Nierman W.C."/>
        </authorList>
    </citation>
    <scope>NUCLEOTIDE SEQUENCE [LARGE SCALE GENOMIC DNA]</scope>
    <source>
        <strain>NCTC 10247</strain>
    </source>
</reference>
<sequence length="97" mass="9967">MAKTATPGACASDPGSGPLPENYEMALAELEALVARMEGGTLSLEDSLAAYRRGAALVAFCQQQLEKAEQQVRVLDGASLKPLSAGTAAADGEDDDL</sequence>
<accession>A3MBD0</accession>
<protein>
    <recommendedName>
        <fullName evidence="1">Exodeoxyribonuclease 7 small subunit</fullName>
        <ecNumber evidence="1">3.1.11.6</ecNumber>
    </recommendedName>
    <alternativeName>
        <fullName evidence="1">Exodeoxyribonuclease VII small subunit</fullName>
        <shortName evidence="1">Exonuclease VII small subunit</shortName>
    </alternativeName>
</protein>